<name>Y7403_ARTBC</name>
<dbReference type="EC" id="3.4.23.-"/>
<dbReference type="EMBL" id="ABSU01000008">
    <property type="protein sequence ID" value="EFE33939.1"/>
    <property type="status" value="ALT_SEQ"/>
    <property type="molecule type" value="Genomic_DNA"/>
</dbReference>
<dbReference type="RefSeq" id="XP_003014842.1">
    <property type="nucleotide sequence ID" value="XM_003014796.1"/>
</dbReference>
<dbReference type="SMR" id="D4AT39"/>
<dbReference type="MEROPS" id="A01.079"/>
<dbReference type="GeneID" id="9520379"/>
<dbReference type="KEGG" id="abe:ARB_07403"/>
<dbReference type="eggNOG" id="KOG1339">
    <property type="taxonomic scope" value="Eukaryota"/>
</dbReference>
<dbReference type="HOGENOM" id="CLU_013253_0_1_1"/>
<dbReference type="OrthoDB" id="2747330at2759"/>
<dbReference type="Proteomes" id="UP000008866">
    <property type="component" value="Unassembled WGS sequence"/>
</dbReference>
<dbReference type="GO" id="GO:0005576">
    <property type="term" value="C:extracellular region"/>
    <property type="evidence" value="ECO:0007669"/>
    <property type="project" value="UniProtKB-SubCell"/>
</dbReference>
<dbReference type="GO" id="GO:0004190">
    <property type="term" value="F:aspartic-type endopeptidase activity"/>
    <property type="evidence" value="ECO:0007669"/>
    <property type="project" value="UniProtKB-KW"/>
</dbReference>
<dbReference type="GO" id="GO:0006508">
    <property type="term" value="P:proteolysis"/>
    <property type="evidence" value="ECO:0007669"/>
    <property type="project" value="UniProtKB-KW"/>
</dbReference>
<dbReference type="CDD" id="cd06097">
    <property type="entry name" value="Aspergillopepsin_like"/>
    <property type="match status" value="1"/>
</dbReference>
<dbReference type="FunFam" id="2.40.70.10:FF:000026">
    <property type="entry name" value="Endothiapepsin"/>
    <property type="match status" value="1"/>
</dbReference>
<dbReference type="Gene3D" id="2.40.70.10">
    <property type="entry name" value="Acid Proteases"/>
    <property type="match status" value="2"/>
</dbReference>
<dbReference type="InterPro" id="IPR001461">
    <property type="entry name" value="Aspartic_peptidase_A1"/>
</dbReference>
<dbReference type="InterPro" id="IPR001969">
    <property type="entry name" value="Aspartic_peptidase_AS"/>
</dbReference>
<dbReference type="InterPro" id="IPR034163">
    <property type="entry name" value="Aspergillopepsin-like_cat_dom"/>
</dbReference>
<dbReference type="InterPro" id="IPR033121">
    <property type="entry name" value="PEPTIDASE_A1"/>
</dbReference>
<dbReference type="InterPro" id="IPR021109">
    <property type="entry name" value="Peptidase_aspartic_dom_sf"/>
</dbReference>
<dbReference type="PANTHER" id="PTHR47966:SF23">
    <property type="entry name" value="ASPARTIC ENDOPEPTIDASE, PUTATIVE (AFU_ORTHOLOGUE AFUA_2G15950)-RELATED"/>
    <property type="match status" value="1"/>
</dbReference>
<dbReference type="PANTHER" id="PTHR47966">
    <property type="entry name" value="BETA-SITE APP-CLEAVING ENZYME, ISOFORM A-RELATED"/>
    <property type="match status" value="1"/>
</dbReference>
<dbReference type="Pfam" id="PF00026">
    <property type="entry name" value="Asp"/>
    <property type="match status" value="1"/>
</dbReference>
<dbReference type="PRINTS" id="PR00792">
    <property type="entry name" value="PEPSIN"/>
</dbReference>
<dbReference type="SUPFAM" id="SSF50630">
    <property type="entry name" value="Acid proteases"/>
    <property type="match status" value="1"/>
</dbReference>
<dbReference type="PROSITE" id="PS00141">
    <property type="entry name" value="ASP_PROTEASE"/>
    <property type="match status" value="2"/>
</dbReference>
<dbReference type="PROSITE" id="PS51767">
    <property type="entry name" value="PEPTIDASE_A1"/>
    <property type="match status" value="1"/>
</dbReference>
<accession>D4AT39</accession>
<organism>
    <name type="scientific">Arthroderma benhamiae (strain ATCC MYA-4681 / CBS 112371)</name>
    <name type="common">Trichophyton mentagrophytes</name>
    <dbReference type="NCBI Taxonomy" id="663331"/>
    <lineage>
        <taxon>Eukaryota</taxon>
        <taxon>Fungi</taxon>
        <taxon>Dikarya</taxon>
        <taxon>Ascomycota</taxon>
        <taxon>Pezizomycotina</taxon>
        <taxon>Eurotiomycetes</taxon>
        <taxon>Eurotiomycetidae</taxon>
        <taxon>Onygenales</taxon>
        <taxon>Arthrodermataceae</taxon>
        <taxon>Trichophyton</taxon>
    </lineage>
</organism>
<gene>
    <name type="ORF">ARB_07403</name>
</gene>
<evidence type="ECO:0000250" key="1"/>
<evidence type="ECO:0000255" key="2"/>
<evidence type="ECO:0000255" key="3">
    <source>
        <dbReference type="PROSITE-ProRule" id="PRU01103"/>
    </source>
</evidence>
<evidence type="ECO:0000255" key="4">
    <source>
        <dbReference type="PROSITE-ProRule" id="PRU10094"/>
    </source>
</evidence>
<evidence type="ECO:0000256" key="5">
    <source>
        <dbReference type="SAM" id="MobiDB-lite"/>
    </source>
</evidence>
<evidence type="ECO:0000305" key="6"/>
<reference key="1">
    <citation type="journal article" date="2011" name="Genome Biol.">
        <title>Comparative and functional genomics provide insights into the pathogenicity of dermatophytic fungi.</title>
        <authorList>
            <person name="Burmester A."/>
            <person name="Shelest E."/>
            <person name="Gloeckner G."/>
            <person name="Heddergott C."/>
            <person name="Schindler S."/>
            <person name="Staib P."/>
            <person name="Heidel A."/>
            <person name="Felder M."/>
            <person name="Petzold A."/>
            <person name="Szafranski K."/>
            <person name="Feuermann M."/>
            <person name="Pedruzzi I."/>
            <person name="Priebe S."/>
            <person name="Groth M."/>
            <person name="Winkler R."/>
            <person name="Li W."/>
            <person name="Kniemeyer O."/>
            <person name="Schroeckh V."/>
            <person name="Hertweck C."/>
            <person name="Hube B."/>
            <person name="White T.C."/>
            <person name="Platzer M."/>
            <person name="Guthke R."/>
            <person name="Heitman J."/>
            <person name="Woestemeyer J."/>
            <person name="Zipfel P.F."/>
            <person name="Monod M."/>
            <person name="Brakhage A.A."/>
        </authorList>
    </citation>
    <scope>NUCLEOTIDE SEQUENCE [LARGE SCALE GENOMIC DNA]</scope>
    <source>
        <strain>ATCC MYA-4681 / CBS 112371</strain>
    </source>
</reference>
<protein>
    <recommendedName>
        <fullName>Probable aspartic-type endopeptidase ARB_07403</fullName>
        <ecNumber>3.4.23.-</ecNumber>
    </recommendedName>
</protein>
<proteinExistence type="inferred from homology"/>
<keyword id="KW-0064">Aspartyl protease</keyword>
<keyword id="KW-0325">Glycoprotein</keyword>
<keyword id="KW-0378">Hydrolase</keyword>
<keyword id="KW-0645">Protease</keyword>
<keyword id="KW-1185">Reference proteome</keyword>
<keyword id="KW-0964">Secreted</keyword>
<keyword id="KW-0732">Signal</keyword>
<keyword id="KW-0843">Virulence</keyword>
<keyword id="KW-0865">Zymogen</keyword>
<comment type="function">
    <text evidence="1">Probable secreted aspartic-type endopeptidase which contributes to virulence.</text>
</comment>
<comment type="subcellular location">
    <subcellularLocation>
        <location evidence="1">Secreted</location>
    </subcellularLocation>
</comment>
<comment type="similarity">
    <text evidence="6">Belongs to the peptidase A1 family.</text>
</comment>
<comment type="sequence caution" evidence="6">
    <conflict type="erroneous gene model prediction">
        <sequence resource="EMBL-CDS" id="EFE33939"/>
    </conflict>
</comment>
<feature type="signal peptide" evidence="2">
    <location>
        <begin position="1"/>
        <end position="17"/>
    </location>
</feature>
<feature type="propeptide" id="PRO_0000397718" description="Activation peptide" evidence="1">
    <location>
        <begin position="18"/>
        <end position="87"/>
    </location>
</feature>
<feature type="chain" id="PRO_0000397719" description="Probable aspartic-type endopeptidase ARB_07403">
    <location>
        <begin position="88"/>
        <end position="430"/>
    </location>
</feature>
<feature type="domain" description="Peptidase A1" evidence="3">
    <location>
        <begin position="109"/>
        <end position="427"/>
    </location>
</feature>
<feature type="region of interest" description="Disordered" evidence="5">
    <location>
        <begin position="66"/>
        <end position="105"/>
    </location>
</feature>
<feature type="compositionally biased region" description="Basic and acidic residues" evidence="5">
    <location>
        <begin position="87"/>
        <end position="97"/>
    </location>
</feature>
<feature type="active site" evidence="4">
    <location>
        <position position="125"/>
    </location>
</feature>
<feature type="active site" evidence="4">
    <location>
        <position position="314"/>
    </location>
</feature>
<feature type="glycosylation site" description="N-linked (GlcNAc...) asparagine" evidence="2">
    <location>
        <position position="306"/>
    </location>
</feature>
<sequence length="430" mass="46693">MHVSTLLVAVLLPLALSKPTPRKKTGSFKVHLARRGETEYSRDGPTDLQRAYAKYGIPTTHEMDGYHPQHISKLPGNSKATAGSGKEGVESQDEKGEVVNNPTNHDIQFLSPVTIGGQPFIMNFDTGSSDTWVMNTQMTDEEAKKDHHLYDPSKSKTASKLVDQTFDIKYGDKTHASGPVYSDVMDIGGATVRNQAIGLPSKVAASLAEDKTSDGLVGLAMTKLNTIRPVKQKTFFENLAEDLDEPVFTAQLRHGKMGSYEFGTIDKSKYHGDLIKVPVINENGFWEIPCSLYSVGKLDKIQTIQNGTGTAILDTGTTLLVLDEKIVKAYYAQVPGARYDPTRFAGWVYPCNSPMPSLFLAVGTDHMAIIPSSLLTFQSYGPGPDGVETCYGGLQSNNAGGIQILGDVFFKALFVVFDQRGPSISLAPHA</sequence>